<reference key="1">
    <citation type="journal article" date="2010" name="Peptides">
        <title>Novel conopeptides in a form of disulfide-crosslinked dimer.</title>
        <authorList>
            <person name="Wu X.-C."/>
            <person name="Zhou M."/>
            <person name="Peng C."/>
            <person name="Shao X.-X."/>
            <person name="Guo Z.-Y."/>
            <person name="Chi C.-W."/>
        </authorList>
    </citation>
    <scope>NUCLEOTIDE SEQUENCE [MRNA]</scope>
    <source>
        <tissue>Venom duct</tissue>
    </source>
</reference>
<organism>
    <name type="scientific">Conus pulicarius</name>
    <name type="common">Flea-bitten cone</name>
    <dbReference type="NCBI Taxonomy" id="93154"/>
    <lineage>
        <taxon>Eukaryota</taxon>
        <taxon>Metazoa</taxon>
        <taxon>Spiralia</taxon>
        <taxon>Lophotrochozoa</taxon>
        <taxon>Mollusca</taxon>
        <taxon>Gastropoda</taxon>
        <taxon>Caenogastropoda</taxon>
        <taxon>Neogastropoda</taxon>
        <taxon>Conoidea</taxon>
        <taxon>Conidae</taxon>
        <taxon>Conus</taxon>
    </lineage>
</organism>
<feature type="signal peptide" evidence="3">
    <location>
        <begin position="1" status="less than"/>
        <end position="16"/>
    </location>
</feature>
<feature type="propeptide" id="PRO_0000397190" evidence="1">
    <location>
        <begin position="17"/>
        <end position="49"/>
    </location>
</feature>
<feature type="peptide" id="PRO_0000397191" description="Conotoxin Pu3.4">
    <location>
        <begin position="50"/>
        <end position="64"/>
    </location>
</feature>
<feature type="modified residue" description="4-hydroxyproline" evidence="1">
    <location>
        <position position="61"/>
    </location>
</feature>
<feature type="disulfide bond" evidence="2">
    <location>
        <begin position="50"/>
        <end position="63"/>
    </location>
</feature>
<feature type="disulfide bond" evidence="2">
    <location>
        <begin position="51"/>
        <end position="59"/>
    </location>
</feature>
<feature type="disulfide bond" evidence="2">
    <location>
        <begin position="55"/>
        <end position="62"/>
    </location>
</feature>
<feature type="non-terminal residue">
    <location>
        <position position="1"/>
    </location>
</feature>
<sequence length="64" mass="7129">LGVLLPICLLLFPLTALPLDGDQPADRPAERMQDDFITEQHPLFDPVKRCCDWPCNAGCVPCCF</sequence>
<accession>P0CH22</accession>
<name>M34_CONPL</name>
<keyword id="KW-0165">Cleavage on pair of basic residues</keyword>
<keyword id="KW-1015">Disulfide bond</keyword>
<keyword id="KW-0379">Hydroxylation</keyword>
<keyword id="KW-0964">Secreted</keyword>
<keyword id="KW-0732">Signal</keyword>
<keyword id="KW-0800">Toxin</keyword>
<evidence type="ECO:0000250" key="1"/>
<evidence type="ECO:0000250" key="2">
    <source>
        <dbReference type="UniProtKB" id="P0CI24"/>
    </source>
</evidence>
<evidence type="ECO:0000255" key="3"/>
<evidence type="ECO:0000305" key="4"/>
<dbReference type="GO" id="GO:0005576">
    <property type="term" value="C:extracellular region"/>
    <property type="evidence" value="ECO:0007669"/>
    <property type="project" value="UniProtKB-SubCell"/>
</dbReference>
<dbReference type="GO" id="GO:0008200">
    <property type="term" value="F:ion channel inhibitor activity"/>
    <property type="evidence" value="ECO:0007669"/>
    <property type="project" value="InterPro"/>
</dbReference>
<dbReference type="GO" id="GO:0090729">
    <property type="term" value="F:toxin activity"/>
    <property type="evidence" value="ECO:0007669"/>
    <property type="project" value="UniProtKB-KW"/>
</dbReference>
<dbReference type="InterPro" id="IPR004214">
    <property type="entry name" value="Conotoxin"/>
</dbReference>
<dbReference type="Pfam" id="PF02950">
    <property type="entry name" value="Conotoxin"/>
    <property type="match status" value="1"/>
</dbReference>
<protein>
    <recommendedName>
        <fullName>Conotoxin Pu3.4</fullName>
    </recommendedName>
</protein>
<comment type="subcellular location">
    <subcellularLocation>
        <location evidence="1">Secreted</location>
    </subcellularLocation>
</comment>
<comment type="tissue specificity">
    <text>Expressed by the venom duct.</text>
</comment>
<comment type="domain">
    <text>The cysteine framework is III (CC-C-C-CC). Classified in the M-2 branch, since 2 residues stand between the fourth and the fifth cysteine residues.</text>
</comment>
<comment type="similarity">
    <text evidence="4">Belongs to the conotoxin M superfamily.</text>
</comment>
<proteinExistence type="evidence at transcript level"/>